<accession>Q57IP9</accession>
<gene>
    <name evidence="1" type="primary">tusA</name>
    <name type="ordered locus">SCH_3507</name>
</gene>
<comment type="function">
    <text evidence="1">Sulfur carrier protein involved in sulfur trafficking in the cell. Part of a sulfur-relay system required for 2-thiolation during synthesis of 2-thiouridine of the modified wobble base 5-methylaminomethyl-2-thiouridine (mnm(5)s(2)U) in tRNA. Interacts with IscS and stimulates its cysteine desulfurase activity. Accepts an activated sulfur from IscS, which is then transferred to TusD, and thus determines the direction of sulfur flow from IscS to 2-thiouridine formation. Also appears to be involved in sulfur transfer for the biosynthesis of molybdopterin.</text>
</comment>
<comment type="pathway">
    <text evidence="1">tRNA modification.</text>
</comment>
<comment type="subunit">
    <text evidence="1">Interacts with IscS.</text>
</comment>
<comment type="subcellular location">
    <subcellularLocation>
        <location evidence="1">Cytoplasm</location>
    </subcellularLocation>
</comment>
<comment type="similarity">
    <text evidence="1">Belongs to the sulfur carrier protein TusA family.</text>
</comment>
<comment type="sequence caution" evidence="2">
    <conflict type="erroneous initiation">
        <sequence resource="EMBL-CDS" id="AAX67413"/>
    </conflict>
</comment>
<evidence type="ECO:0000255" key="1">
    <source>
        <dbReference type="HAMAP-Rule" id="MF_00413"/>
    </source>
</evidence>
<evidence type="ECO:0000305" key="2"/>
<feature type="chain" id="PRO_0000159049" description="Sulfur carrier protein TusA">
    <location>
        <begin position="1"/>
        <end position="81"/>
    </location>
</feature>
<feature type="active site" description="Cysteine persulfide intermediate" evidence="1">
    <location>
        <position position="19"/>
    </location>
</feature>
<proteinExistence type="inferred from homology"/>
<keyword id="KW-0963">Cytoplasm</keyword>
<keyword id="KW-0819">tRNA processing</keyword>
<organism>
    <name type="scientific">Salmonella choleraesuis (strain SC-B67)</name>
    <dbReference type="NCBI Taxonomy" id="321314"/>
    <lineage>
        <taxon>Bacteria</taxon>
        <taxon>Pseudomonadati</taxon>
        <taxon>Pseudomonadota</taxon>
        <taxon>Gammaproteobacteria</taxon>
        <taxon>Enterobacterales</taxon>
        <taxon>Enterobacteriaceae</taxon>
        <taxon>Salmonella</taxon>
    </lineage>
</organism>
<protein>
    <recommendedName>
        <fullName evidence="1">Sulfur carrier protein TusA</fullName>
    </recommendedName>
    <alternativeName>
        <fullName evidence="1">Sulfur mediator TusA</fullName>
    </alternativeName>
    <alternativeName>
        <fullName evidence="1">Sulfur transfer protein TusA</fullName>
    </alternativeName>
    <alternativeName>
        <fullName evidence="1">tRNA 2-thiouridine synthesizing protein A</fullName>
    </alternativeName>
</protein>
<sequence length="81" mass="9193">MSDLFSSPDHTLDALGLRCPEPVMMVRKTVRNMQTGETLLIIADDPATTRDIPGFCTFMEHDLLAQETEGLPYRYLLRKAH</sequence>
<dbReference type="EMBL" id="AE017220">
    <property type="protein sequence ID" value="AAX67413.1"/>
    <property type="status" value="ALT_INIT"/>
    <property type="molecule type" value="Genomic_DNA"/>
</dbReference>
<dbReference type="RefSeq" id="WP_001541054.1">
    <property type="nucleotide sequence ID" value="NC_006905.1"/>
</dbReference>
<dbReference type="SMR" id="Q57IP9"/>
<dbReference type="GeneID" id="66757902"/>
<dbReference type="KEGG" id="sec:SCH_3507"/>
<dbReference type="HOGENOM" id="CLU_165255_5_0_6"/>
<dbReference type="Proteomes" id="UP000000538">
    <property type="component" value="Chromosome"/>
</dbReference>
<dbReference type="GO" id="GO:0005737">
    <property type="term" value="C:cytoplasm"/>
    <property type="evidence" value="ECO:0007669"/>
    <property type="project" value="UniProtKB-SubCell"/>
</dbReference>
<dbReference type="GO" id="GO:0097163">
    <property type="term" value="F:sulfur carrier activity"/>
    <property type="evidence" value="ECO:0007669"/>
    <property type="project" value="UniProtKB-UniRule"/>
</dbReference>
<dbReference type="GO" id="GO:0002143">
    <property type="term" value="P:tRNA wobble position uridine thiolation"/>
    <property type="evidence" value="ECO:0007669"/>
    <property type="project" value="InterPro"/>
</dbReference>
<dbReference type="CDD" id="cd03423">
    <property type="entry name" value="SirA"/>
    <property type="match status" value="1"/>
</dbReference>
<dbReference type="Gene3D" id="3.30.110.40">
    <property type="entry name" value="TusA-like domain"/>
    <property type="match status" value="1"/>
</dbReference>
<dbReference type="HAMAP" id="MF_00413">
    <property type="entry name" value="Thiourid_synth_A"/>
    <property type="match status" value="1"/>
</dbReference>
<dbReference type="InterPro" id="IPR022931">
    <property type="entry name" value="Sulphur_carrier_TusA"/>
</dbReference>
<dbReference type="InterPro" id="IPR001455">
    <property type="entry name" value="TusA-like"/>
</dbReference>
<dbReference type="InterPro" id="IPR036868">
    <property type="entry name" value="TusA-like_sf"/>
</dbReference>
<dbReference type="NCBIfam" id="NF001423">
    <property type="entry name" value="PRK00299.1"/>
    <property type="match status" value="1"/>
</dbReference>
<dbReference type="PANTHER" id="PTHR33279:SF2">
    <property type="entry name" value="SULFUR CARRIER PROTEIN TUSA"/>
    <property type="match status" value="1"/>
</dbReference>
<dbReference type="PANTHER" id="PTHR33279">
    <property type="entry name" value="SULFUR CARRIER PROTEIN YEDF-RELATED"/>
    <property type="match status" value="1"/>
</dbReference>
<dbReference type="Pfam" id="PF01206">
    <property type="entry name" value="TusA"/>
    <property type="match status" value="1"/>
</dbReference>
<dbReference type="SUPFAM" id="SSF64307">
    <property type="entry name" value="SirA-like"/>
    <property type="match status" value="1"/>
</dbReference>
<dbReference type="PROSITE" id="PS01148">
    <property type="entry name" value="UPF0033"/>
    <property type="match status" value="1"/>
</dbReference>
<reference key="1">
    <citation type="journal article" date="2005" name="Nucleic Acids Res.">
        <title>The genome sequence of Salmonella enterica serovar Choleraesuis, a highly invasive and resistant zoonotic pathogen.</title>
        <authorList>
            <person name="Chiu C.-H."/>
            <person name="Tang P."/>
            <person name="Chu C."/>
            <person name="Hu S."/>
            <person name="Bao Q."/>
            <person name="Yu J."/>
            <person name="Chou Y.-Y."/>
            <person name="Wang H.-S."/>
            <person name="Lee Y.-S."/>
        </authorList>
    </citation>
    <scope>NUCLEOTIDE SEQUENCE [LARGE SCALE GENOMIC DNA]</scope>
    <source>
        <strain>SC-B67</strain>
    </source>
</reference>
<name>TUSA_SALCH</name>